<organism>
    <name type="scientific">Sulfurisphaera tokodaii (strain DSM 16993 / JCM 10545 / NBRC 100140 / 7)</name>
    <name type="common">Sulfolobus tokodaii</name>
    <dbReference type="NCBI Taxonomy" id="273063"/>
    <lineage>
        <taxon>Archaea</taxon>
        <taxon>Thermoproteota</taxon>
        <taxon>Thermoprotei</taxon>
        <taxon>Sulfolobales</taxon>
        <taxon>Sulfolobaceae</taxon>
        <taxon>Sulfurisphaera</taxon>
    </lineage>
</organism>
<accession>Q975S6</accession>
<proteinExistence type="inferred from homology"/>
<feature type="chain" id="PRO_0000139740" description="Large ribosomal subunit protein eL37">
    <location>
        <begin position="1"/>
        <end position="61"/>
    </location>
</feature>
<feature type="zinc finger region" description="C4-type" evidence="2">
    <location>
        <begin position="19"/>
        <end position="37"/>
    </location>
</feature>
<feature type="binding site" evidence="1">
    <location>
        <position position="19"/>
    </location>
    <ligand>
        <name>Zn(2+)</name>
        <dbReference type="ChEBI" id="CHEBI:29105"/>
    </ligand>
</feature>
<feature type="binding site" evidence="1">
    <location>
        <position position="22"/>
    </location>
    <ligand>
        <name>Zn(2+)</name>
        <dbReference type="ChEBI" id="CHEBI:29105"/>
    </ligand>
</feature>
<feature type="binding site" evidence="1">
    <location>
        <position position="34"/>
    </location>
    <ligand>
        <name>Zn(2+)</name>
        <dbReference type="ChEBI" id="CHEBI:29105"/>
    </ligand>
</feature>
<feature type="binding site" evidence="1">
    <location>
        <position position="37"/>
    </location>
    <ligand>
        <name>Zn(2+)</name>
        <dbReference type="ChEBI" id="CHEBI:29105"/>
    </ligand>
</feature>
<sequence length="61" mass="7050">MKGTPSFGKMNKSPTHVRCRRCGRNSFNVRKGYCAACGFGRSKKIRRYNWQNKKVNGLRLV</sequence>
<protein>
    <recommendedName>
        <fullName evidence="3">Large ribosomal subunit protein eL37</fullName>
    </recommendedName>
    <alternativeName>
        <fullName>50S ribosomal protein L37e</fullName>
    </alternativeName>
</protein>
<reference key="1">
    <citation type="journal article" date="2001" name="DNA Res.">
        <title>Complete genome sequence of an aerobic thermoacidophilic Crenarchaeon, Sulfolobus tokodaii strain7.</title>
        <authorList>
            <person name="Kawarabayasi Y."/>
            <person name="Hino Y."/>
            <person name="Horikawa H."/>
            <person name="Jin-no K."/>
            <person name="Takahashi M."/>
            <person name="Sekine M."/>
            <person name="Baba S."/>
            <person name="Ankai A."/>
            <person name="Kosugi H."/>
            <person name="Hosoyama A."/>
            <person name="Fukui S."/>
            <person name="Nagai Y."/>
            <person name="Nishijima K."/>
            <person name="Otsuka R."/>
            <person name="Nakazawa H."/>
            <person name="Takamiya M."/>
            <person name="Kato Y."/>
            <person name="Yoshizawa T."/>
            <person name="Tanaka T."/>
            <person name="Kudoh Y."/>
            <person name="Yamazaki J."/>
            <person name="Kushida N."/>
            <person name="Oguchi A."/>
            <person name="Aoki K."/>
            <person name="Masuda S."/>
            <person name="Yanagii M."/>
            <person name="Nishimura M."/>
            <person name="Yamagishi A."/>
            <person name="Oshima T."/>
            <person name="Kikuchi H."/>
        </authorList>
    </citation>
    <scope>NUCLEOTIDE SEQUENCE [LARGE SCALE GENOMIC DNA]</scope>
    <source>
        <strain>DSM 16993 / JCM 10545 / NBRC 100140 / 7</strain>
    </source>
</reference>
<evidence type="ECO:0000250" key="1"/>
<evidence type="ECO:0000255" key="2"/>
<evidence type="ECO:0000305" key="3"/>
<dbReference type="EMBL" id="BA000023">
    <property type="protein sequence ID" value="BAB65324.1"/>
    <property type="molecule type" value="Genomic_DNA"/>
</dbReference>
<dbReference type="RefSeq" id="WP_010978307.1">
    <property type="nucleotide sequence ID" value="NC_003106.2"/>
</dbReference>
<dbReference type="SMR" id="Q975S6"/>
<dbReference type="STRING" id="273063.STK_03455"/>
<dbReference type="KEGG" id="sto:STK_03455"/>
<dbReference type="PATRIC" id="fig|273063.9.peg.403"/>
<dbReference type="eggNOG" id="arCOG04126">
    <property type="taxonomic scope" value="Archaea"/>
</dbReference>
<dbReference type="OrthoDB" id="5619at2157"/>
<dbReference type="Proteomes" id="UP000001015">
    <property type="component" value="Chromosome"/>
</dbReference>
<dbReference type="GO" id="GO:0022625">
    <property type="term" value="C:cytosolic large ribosomal subunit"/>
    <property type="evidence" value="ECO:0007669"/>
    <property type="project" value="TreeGrafter"/>
</dbReference>
<dbReference type="GO" id="GO:0019843">
    <property type="term" value="F:rRNA binding"/>
    <property type="evidence" value="ECO:0007669"/>
    <property type="project" value="UniProtKB-KW"/>
</dbReference>
<dbReference type="GO" id="GO:0003735">
    <property type="term" value="F:structural constituent of ribosome"/>
    <property type="evidence" value="ECO:0007669"/>
    <property type="project" value="InterPro"/>
</dbReference>
<dbReference type="GO" id="GO:0008270">
    <property type="term" value="F:zinc ion binding"/>
    <property type="evidence" value="ECO:0007669"/>
    <property type="project" value="UniProtKB-UniRule"/>
</dbReference>
<dbReference type="GO" id="GO:0006412">
    <property type="term" value="P:translation"/>
    <property type="evidence" value="ECO:0007669"/>
    <property type="project" value="UniProtKB-UniRule"/>
</dbReference>
<dbReference type="FunFam" id="2.20.25.30:FF:000003">
    <property type="entry name" value="50S ribosomal protein L37e"/>
    <property type="match status" value="1"/>
</dbReference>
<dbReference type="Gene3D" id="2.20.25.30">
    <property type="match status" value="1"/>
</dbReference>
<dbReference type="HAMAP" id="MF_00547">
    <property type="entry name" value="Ribosomal_eL37"/>
    <property type="match status" value="1"/>
</dbReference>
<dbReference type="InterPro" id="IPR001569">
    <property type="entry name" value="Ribosomal_eL37"/>
</dbReference>
<dbReference type="InterPro" id="IPR011331">
    <property type="entry name" value="Ribosomal_eL37/eL43"/>
</dbReference>
<dbReference type="InterPro" id="IPR018267">
    <property type="entry name" value="Ribosomal_eL37_CS"/>
</dbReference>
<dbReference type="InterPro" id="IPR011332">
    <property type="entry name" value="Ribosomal_zn-bd"/>
</dbReference>
<dbReference type="NCBIfam" id="NF003214">
    <property type="entry name" value="PRK04179.1"/>
    <property type="match status" value="1"/>
</dbReference>
<dbReference type="PANTHER" id="PTHR10768">
    <property type="entry name" value="60S RIBOSOMAL PROTEIN L37"/>
    <property type="match status" value="1"/>
</dbReference>
<dbReference type="PANTHER" id="PTHR10768:SF0">
    <property type="entry name" value="RIBOSOMAL PROTEIN L37"/>
    <property type="match status" value="1"/>
</dbReference>
<dbReference type="Pfam" id="PF01907">
    <property type="entry name" value="Ribosomal_L37e"/>
    <property type="match status" value="1"/>
</dbReference>
<dbReference type="SUPFAM" id="SSF57829">
    <property type="entry name" value="Zn-binding ribosomal proteins"/>
    <property type="match status" value="1"/>
</dbReference>
<dbReference type="PROSITE" id="PS01077">
    <property type="entry name" value="RIBOSOMAL_L37E"/>
    <property type="match status" value="1"/>
</dbReference>
<name>RL37_SULTO</name>
<gene>
    <name type="primary">rpl37e</name>
    <name type="ordered locus">STK_03455</name>
    <name type="ORF">STS049</name>
</gene>
<comment type="function">
    <text evidence="1">Binds to the 23S rRNA.</text>
</comment>
<comment type="cofactor">
    <cofactor evidence="1">
        <name>Zn(2+)</name>
        <dbReference type="ChEBI" id="CHEBI:29105"/>
    </cofactor>
    <text evidence="1">Binds 1 zinc ion per subunit.</text>
</comment>
<comment type="similarity">
    <text evidence="3">Belongs to the eukaryotic ribosomal protein eL37 family.</text>
</comment>
<keyword id="KW-0479">Metal-binding</keyword>
<keyword id="KW-1185">Reference proteome</keyword>
<keyword id="KW-0687">Ribonucleoprotein</keyword>
<keyword id="KW-0689">Ribosomal protein</keyword>
<keyword id="KW-0694">RNA-binding</keyword>
<keyword id="KW-0699">rRNA-binding</keyword>
<keyword id="KW-0862">Zinc</keyword>
<keyword id="KW-0863">Zinc-finger</keyword>